<feature type="signal peptide" evidence="2">
    <location>
        <begin position="1"/>
        <end position="27"/>
    </location>
</feature>
<feature type="chain" id="PRO_0000415851" description="WAP four-disulfide core domain protein 6A">
    <location>
        <begin position="28"/>
        <end position="136"/>
    </location>
</feature>
<feature type="domain" description="WAP" evidence="4">
    <location>
        <begin position="28"/>
        <end position="73"/>
    </location>
</feature>
<feature type="domain" description="BPTI/Kunitz inhibitor" evidence="3">
    <location>
        <begin position="77"/>
        <end position="127"/>
    </location>
</feature>
<feature type="disulfide bond" evidence="1">
    <location>
        <begin position="33"/>
        <end position="61"/>
    </location>
</feature>
<feature type="disulfide bond" evidence="1">
    <location>
        <begin position="40"/>
        <end position="65"/>
    </location>
</feature>
<feature type="disulfide bond" evidence="1">
    <location>
        <begin position="48"/>
        <end position="60"/>
    </location>
</feature>
<feature type="disulfide bond" evidence="1">
    <location>
        <begin position="54"/>
        <end position="69"/>
    </location>
</feature>
<feature type="disulfide bond" evidence="1">
    <location>
        <begin position="77"/>
        <end position="127"/>
    </location>
</feature>
<feature type="disulfide bond" evidence="1">
    <location>
        <begin position="86"/>
        <end position="110"/>
    </location>
</feature>
<feature type="disulfide bond" evidence="1">
    <location>
        <begin position="102"/>
        <end position="123"/>
    </location>
</feature>
<comment type="subcellular location">
    <subcellularLocation>
        <location evidence="5">Secreted</location>
    </subcellularLocation>
</comment>
<sequence>MRLWGLLPFLVPFILLWSIQEPELAEGFFIRTCPRVRVKCEVEERNECTRHRQCPNKKRCCLFSCGKKCMDLRQDVCSLPQDPGPCLAYLPRWWYNQETDLCTEFIYGGCQGNPNNFPSEGICTVVCKKKQMSSWI</sequence>
<dbReference type="EMBL" id="AK136589">
    <property type="protein sequence ID" value="BAE23064.1"/>
    <property type="molecule type" value="mRNA"/>
</dbReference>
<dbReference type="EMBL" id="AL591478">
    <property type="status" value="NOT_ANNOTATED_CDS"/>
    <property type="molecule type" value="Genomic_DNA"/>
</dbReference>
<dbReference type="EMBL" id="BC147597">
    <property type="protein sequence ID" value="AAI47598.1"/>
    <property type="molecule type" value="mRNA"/>
</dbReference>
<dbReference type="EMBL" id="BC147615">
    <property type="protein sequence ID" value="AAI47616.1"/>
    <property type="molecule type" value="mRNA"/>
</dbReference>
<dbReference type="CCDS" id="CCDS17042.1"/>
<dbReference type="RefSeq" id="NP_001028412.1">
    <property type="nucleotide sequence ID" value="NM_001033240.4"/>
</dbReference>
<dbReference type="RefSeq" id="NP_001171319.1">
    <property type="nucleotide sequence ID" value="NM_001177848.1"/>
</dbReference>
<dbReference type="SMR" id="Q3UW55"/>
<dbReference type="FunCoup" id="Q3UW55">
    <property type="interactions" value="2"/>
</dbReference>
<dbReference type="STRING" id="10090.ENSMUSP00000096694"/>
<dbReference type="MEROPS" id="I02.976"/>
<dbReference type="MEROPS" id="I17.953"/>
<dbReference type="PaxDb" id="10090-ENSMUSP00000104966"/>
<dbReference type="ProteomicsDB" id="297556"/>
<dbReference type="DNASU" id="209351"/>
<dbReference type="Ensembl" id="ENSMUST00000099096.9">
    <property type="protein sequence ID" value="ENSMUSP00000096694.3"/>
    <property type="gene ID" value="ENSMUSG00000074595.10"/>
</dbReference>
<dbReference type="Ensembl" id="ENSMUST00000109342.2">
    <property type="protein sequence ID" value="ENSMUSP00000104966.2"/>
    <property type="gene ID" value="ENSMUSG00000074595.10"/>
</dbReference>
<dbReference type="GeneID" id="209351"/>
<dbReference type="KEGG" id="mmu:209351"/>
<dbReference type="UCSC" id="uc008nvg.2">
    <property type="organism name" value="mouse"/>
</dbReference>
<dbReference type="AGR" id="MGI:2684968"/>
<dbReference type="CTD" id="209351"/>
<dbReference type="MGI" id="MGI:2684968">
    <property type="gene designation" value="Wfdc6a"/>
</dbReference>
<dbReference type="VEuPathDB" id="HostDB:ENSMUSG00000074595"/>
<dbReference type="eggNOG" id="KOG4295">
    <property type="taxonomic scope" value="Eukaryota"/>
</dbReference>
<dbReference type="GeneTree" id="ENSGT00940000156753"/>
<dbReference type="HOGENOM" id="CLU_127181_0_0_1"/>
<dbReference type="InParanoid" id="Q3UW55"/>
<dbReference type="OMA" id="TRIPCRY"/>
<dbReference type="OrthoDB" id="4473401at2759"/>
<dbReference type="PhylomeDB" id="Q3UW55"/>
<dbReference type="TreeFam" id="TF342459"/>
<dbReference type="BioGRID-ORCS" id="209351">
    <property type="hits" value="4 hits in 76 CRISPR screens"/>
</dbReference>
<dbReference type="PRO" id="PR:Q3UW55"/>
<dbReference type="Proteomes" id="UP000000589">
    <property type="component" value="Chromosome 2"/>
</dbReference>
<dbReference type="RNAct" id="Q3UW55">
    <property type="molecule type" value="protein"/>
</dbReference>
<dbReference type="Bgee" id="ENSMUSG00000074595">
    <property type="expression patterns" value="Expressed in testis and 17 other cell types or tissues"/>
</dbReference>
<dbReference type="GO" id="GO:0005576">
    <property type="term" value="C:extracellular region"/>
    <property type="evidence" value="ECO:0007669"/>
    <property type="project" value="UniProtKB-SubCell"/>
</dbReference>
<dbReference type="GO" id="GO:0004867">
    <property type="term" value="F:serine-type endopeptidase inhibitor activity"/>
    <property type="evidence" value="ECO:0007669"/>
    <property type="project" value="UniProtKB-KW"/>
</dbReference>
<dbReference type="CDD" id="cd22611">
    <property type="entry name" value="Kunitz_eppin"/>
    <property type="match status" value="1"/>
</dbReference>
<dbReference type="FunFam" id="4.10.410.10:FF:000015">
    <property type="entry name" value="WAP four-disulfide core domain 6A"/>
    <property type="match status" value="1"/>
</dbReference>
<dbReference type="FunFam" id="4.10.75.10:FF:000004">
    <property type="entry name" value="WAP four-disulfide core domain 6A"/>
    <property type="match status" value="1"/>
</dbReference>
<dbReference type="Gene3D" id="4.10.75.10">
    <property type="entry name" value="Elafin-like"/>
    <property type="match status" value="1"/>
</dbReference>
<dbReference type="Gene3D" id="4.10.410.10">
    <property type="entry name" value="Pancreatic trypsin inhibitor Kunitz domain"/>
    <property type="match status" value="1"/>
</dbReference>
<dbReference type="InterPro" id="IPR036645">
    <property type="entry name" value="Elafin-like_sf"/>
</dbReference>
<dbReference type="InterPro" id="IPR002223">
    <property type="entry name" value="Kunitz_BPTI"/>
</dbReference>
<dbReference type="InterPro" id="IPR036880">
    <property type="entry name" value="Kunitz_BPTI_sf"/>
</dbReference>
<dbReference type="InterPro" id="IPR020901">
    <property type="entry name" value="Prtase_inh_Kunz-CS"/>
</dbReference>
<dbReference type="InterPro" id="IPR051388">
    <property type="entry name" value="Serpin_venom_toxin"/>
</dbReference>
<dbReference type="InterPro" id="IPR008197">
    <property type="entry name" value="WAP_dom"/>
</dbReference>
<dbReference type="PANTHER" id="PTHR46751">
    <property type="entry name" value="EPPIN"/>
    <property type="match status" value="1"/>
</dbReference>
<dbReference type="PANTHER" id="PTHR46751:SF1">
    <property type="entry name" value="WAP FOUR-DISULFIDE CORE DOMAIN PROTEIN 6A"/>
    <property type="match status" value="1"/>
</dbReference>
<dbReference type="Pfam" id="PF00014">
    <property type="entry name" value="Kunitz_BPTI"/>
    <property type="match status" value="1"/>
</dbReference>
<dbReference type="Pfam" id="PF00095">
    <property type="entry name" value="WAP"/>
    <property type="match status" value="1"/>
</dbReference>
<dbReference type="PRINTS" id="PR00759">
    <property type="entry name" value="BASICPTASE"/>
</dbReference>
<dbReference type="SMART" id="SM00131">
    <property type="entry name" value="KU"/>
    <property type="match status" value="1"/>
</dbReference>
<dbReference type="SUPFAM" id="SSF57362">
    <property type="entry name" value="BPTI-like"/>
    <property type="match status" value="1"/>
</dbReference>
<dbReference type="SUPFAM" id="SSF57256">
    <property type="entry name" value="Elafin-like"/>
    <property type="match status" value="1"/>
</dbReference>
<dbReference type="PROSITE" id="PS00280">
    <property type="entry name" value="BPTI_KUNITZ_1"/>
    <property type="match status" value="1"/>
</dbReference>
<dbReference type="PROSITE" id="PS50279">
    <property type="entry name" value="BPTI_KUNITZ_2"/>
    <property type="match status" value="1"/>
</dbReference>
<dbReference type="PROSITE" id="PS51390">
    <property type="entry name" value="WAP"/>
    <property type="match status" value="1"/>
</dbReference>
<evidence type="ECO:0000250" key="1"/>
<evidence type="ECO:0000255" key="2"/>
<evidence type="ECO:0000255" key="3">
    <source>
        <dbReference type="PROSITE-ProRule" id="PRU00031"/>
    </source>
</evidence>
<evidence type="ECO:0000255" key="4">
    <source>
        <dbReference type="PROSITE-ProRule" id="PRU00722"/>
    </source>
</evidence>
<evidence type="ECO:0000305" key="5"/>
<reference key="1">
    <citation type="journal article" date="2005" name="Science">
        <title>The transcriptional landscape of the mammalian genome.</title>
        <authorList>
            <person name="Carninci P."/>
            <person name="Kasukawa T."/>
            <person name="Katayama S."/>
            <person name="Gough J."/>
            <person name="Frith M.C."/>
            <person name="Maeda N."/>
            <person name="Oyama R."/>
            <person name="Ravasi T."/>
            <person name="Lenhard B."/>
            <person name="Wells C."/>
            <person name="Kodzius R."/>
            <person name="Shimokawa K."/>
            <person name="Bajic V.B."/>
            <person name="Brenner S.E."/>
            <person name="Batalov S."/>
            <person name="Forrest A.R."/>
            <person name="Zavolan M."/>
            <person name="Davis M.J."/>
            <person name="Wilming L.G."/>
            <person name="Aidinis V."/>
            <person name="Allen J.E."/>
            <person name="Ambesi-Impiombato A."/>
            <person name="Apweiler R."/>
            <person name="Aturaliya R.N."/>
            <person name="Bailey T.L."/>
            <person name="Bansal M."/>
            <person name="Baxter L."/>
            <person name="Beisel K.W."/>
            <person name="Bersano T."/>
            <person name="Bono H."/>
            <person name="Chalk A.M."/>
            <person name="Chiu K.P."/>
            <person name="Choudhary V."/>
            <person name="Christoffels A."/>
            <person name="Clutterbuck D.R."/>
            <person name="Crowe M.L."/>
            <person name="Dalla E."/>
            <person name="Dalrymple B.P."/>
            <person name="de Bono B."/>
            <person name="Della Gatta G."/>
            <person name="di Bernardo D."/>
            <person name="Down T."/>
            <person name="Engstrom P."/>
            <person name="Fagiolini M."/>
            <person name="Faulkner G."/>
            <person name="Fletcher C.F."/>
            <person name="Fukushima T."/>
            <person name="Furuno M."/>
            <person name="Futaki S."/>
            <person name="Gariboldi M."/>
            <person name="Georgii-Hemming P."/>
            <person name="Gingeras T.R."/>
            <person name="Gojobori T."/>
            <person name="Green R.E."/>
            <person name="Gustincich S."/>
            <person name="Harbers M."/>
            <person name="Hayashi Y."/>
            <person name="Hensch T.K."/>
            <person name="Hirokawa N."/>
            <person name="Hill D."/>
            <person name="Huminiecki L."/>
            <person name="Iacono M."/>
            <person name="Ikeo K."/>
            <person name="Iwama A."/>
            <person name="Ishikawa T."/>
            <person name="Jakt M."/>
            <person name="Kanapin A."/>
            <person name="Katoh M."/>
            <person name="Kawasawa Y."/>
            <person name="Kelso J."/>
            <person name="Kitamura H."/>
            <person name="Kitano H."/>
            <person name="Kollias G."/>
            <person name="Krishnan S.P."/>
            <person name="Kruger A."/>
            <person name="Kummerfeld S.K."/>
            <person name="Kurochkin I.V."/>
            <person name="Lareau L.F."/>
            <person name="Lazarevic D."/>
            <person name="Lipovich L."/>
            <person name="Liu J."/>
            <person name="Liuni S."/>
            <person name="McWilliam S."/>
            <person name="Madan Babu M."/>
            <person name="Madera M."/>
            <person name="Marchionni L."/>
            <person name="Matsuda H."/>
            <person name="Matsuzawa S."/>
            <person name="Miki H."/>
            <person name="Mignone F."/>
            <person name="Miyake S."/>
            <person name="Morris K."/>
            <person name="Mottagui-Tabar S."/>
            <person name="Mulder N."/>
            <person name="Nakano N."/>
            <person name="Nakauchi H."/>
            <person name="Ng P."/>
            <person name="Nilsson R."/>
            <person name="Nishiguchi S."/>
            <person name="Nishikawa S."/>
            <person name="Nori F."/>
            <person name="Ohara O."/>
            <person name="Okazaki Y."/>
            <person name="Orlando V."/>
            <person name="Pang K.C."/>
            <person name="Pavan W.J."/>
            <person name="Pavesi G."/>
            <person name="Pesole G."/>
            <person name="Petrovsky N."/>
            <person name="Piazza S."/>
            <person name="Reed J."/>
            <person name="Reid J.F."/>
            <person name="Ring B.Z."/>
            <person name="Ringwald M."/>
            <person name="Rost B."/>
            <person name="Ruan Y."/>
            <person name="Salzberg S.L."/>
            <person name="Sandelin A."/>
            <person name="Schneider C."/>
            <person name="Schoenbach C."/>
            <person name="Sekiguchi K."/>
            <person name="Semple C.A."/>
            <person name="Seno S."/>
            <person name="Sessa L."/>
            <person name="Sheng Y."/>
            <person name="Shibata Y."/>
            <person name="Shimada H."/>
            <person name="Shimada K."/>
            <person name="Silva D."/>
            <person name="Sinclair B."/>
            <person name="Sperling S."/>
            <person name="Stupka E."/>
            <person name="Sugiura K."/>
            <person name="Sultana R."/>
            <person name="Takenaka Y."/>
            <person name="Taki K."/>
            <person name="Tammoja K."/>
            <person name="Tan S.L."/>
            <person name="Tang S."/>
            <person name="Taylor M.S."/>
            <person name="Tegner J."/>
            <person name="Teichmann S.A."/>
            <person name="Ueda H.R."/>
            <person name="van Nimwegen E."/>
            <person name="Verardo R."/>
            <person name="Wei C.L."/>
            <person name="Yagi K."/>
            <person name="Yamanishi H."/>
            <person name="Zabarovsky E."/>
            <person name="Zhu S."/>
            <person name="Zimmer A."/>
            <person name="Hide W."/>
            <person name="Bult C."/>
            <person name="Grimmond S.M."/>
            <person name="Teasdale R.D."/>
            <person name="Liu E.T."/>
            <person name="Brusic V."/>
            <person name="Quackenbush J."/>
            <person name="Wahlestedt C."/>
            <person name="Mattick J.S."/>
            <person name="Hume D.A."/>
            <person name="Kai C."/>
            <person name="Sasaki D."/>
            <person name="Tomaru Y."/>
            <person name="Fukuda S."/>
            <person name="Kanamori-Katayama M."/>
            <person name="Suzuki M."/>
            <person name="Aoki J."/>
            <person name="Arakawa T."/>
            <person name="Iida J."/>
            <person name="Imamura K."/>
            <person name="Itoh M."/>
            <person name="Kato T."/>
            <person name="Kawaji H."/>
            <person name="Kawagashira N."/>
            <person name="Kawashima T."/>
            <person name="Kojima M."/>
            <person name="Kondo S."/>
            <person name="Konno H."/>
            <person name="Nakano K."/>
            <person name="Ninomiya N."/>
            <person name="Nishio T."/>
            <person name="Okada M."/>
            <person name="Plessy C."/>
            <person name="Shibata K."/>
            <person name="Shiraki T."/>
            <person name="Suzuki S."/>
            <person name="Tagami M."/>
            <person name="Waki K."/>
            <person name="Watahiki A."/>
            <person name="Okamura-Oho Y."/>
            <person name="Suzuki H."/>
            <person name="Kawai J."/>
            <person name="Hayashizaki Y."/>
        </authorList>
    </citation>
    <scope>NUCLEOTIDE SEQUENCE [LARGE SCALE MRNA]</scope>
    <source>
        <strain>C57BL/6J</strain>
        <tissue>Epididymis</tissue>
    </source>
</reference>
<reference key="2">
    <citation type="journal article" date="2009" name="PLoS Biol.">
        <title>Lineage-specific biology revealed by a finished genome assembly of the mouse.</title>
        <authorList>
            <person name="Church D.M."/>
            <person name="Goodstadt L."/>
            <person name="Hillier L.W."/>
            <person name="Zody M.C."/>
            <person name="Goldstein S."/>
            <person name="She X."/>
            <person name="Bult C.J."/>
            <person name="Agarwala R."/>
            <person name="Cherry J.L."/>
            <person name="DiCuccio M."/>
            <person name="Hlavina W."/>
            <person name="Kapustin Y."/>
            <person name="Meric P."/>
            <person name="Maglott D."/>
            <person name="Birtle Z."/>
            <person name="Marques A.C."/>
            <person name="Graves T."/>
            <person name="Zhou S."/>
            <person name="Teague B."/>
            <person name="Potamousis K."/>
            <person name="Churas C."/>
            <person name="Place M."/>
            <person name="Herschleb J."/>
            <person name="Runnheim R."/>
            <person name="Forrest D."/>
            <person name="Amos-Landgraf J."/>
            <person name="Schwartz D.C."/>
            <person name="Cheng Z."/>
            <person name="Lindblad-Toh K."/>
            <person name="Eichler E.E."/>
            <person name="Ponting C.P."/>
        </authorList>
    </citation>
    <scope>NUCLEOTIDE SEQUENCE [LARGE SCALE GENOMIC DNA]</scope>
    <source>
        <strain>C57BL/6J</strain>
    </source>
</reference>
<reference key="3">
    <citation type="journal article" date="2004" name="Genome Res.">
        <title>The status, quality, and expansion of the NIH full-length cDNA project: the Mammalian Gene Collection (MGC).</title>
        <authorList>
            <consortium name="The MGC Project Team"/>
        </authorList>
    </citation>
    <scope>NUCLEOTIDE SEQUENCE [LARGE SCALE MRNA]</scope>
    <source>
        <tissue>Testis</tissue>
    </source>
</reference>
<accession>Q3UW55</accession>
<keyword id="KW-1015">Disulfide bond</keyword>
<keyword id="KW-0646">Protease inhibitor</keyword>
<keyword id="KW-1185">Reference proteome</keyword>
<keyword id="KW-0964">Secreted</keyword>
<keyword id="KW-0722">Serine protease inhibitor</keyword>
<keyword id="KW-0732">Signal</keyword>
<gene>
    <name type="primary">Wfdc6a</name>
    <name type="synonym">Gm122</name>
</gene>
<organism>
    <name type="scientific">Mus musculus</name>
    <name type="common">Mouse</name>
    <dbReference type="NCBI Taxonomy" id="10090"/>
    <lineage>
        <taxon>Eukaryota</taxon>
        <taxon>Metazoa</taxon>
        <taxon>Chordata</taxon>
        <taxon>Craniata</taxon>
        <taxon>Vertebrata</taxon>
        <taxon>Euteleostomi</taxon>
        <taxon>Mammalia</taxon>
        <taxon>Eutheria</taxon>
        <taxon>Euarchontoglires</taxon>
        <taxon>Glires</taxon>
        <taxon>Rodentia</taxon>
        <taxon>Myomorpha</taxon>
        <taxon>Muroidea</taxon>
        <taxon>Muridae</taxon>
        <taxon>Murinae</taxon>
        <taxon>Mus</taxon>
        <taxon>Mus</taxon>
    </lineage>
</organism>
<name>WFC6A_MOUSE</name>
<proteinExistence type="evidence at transcript level"/>
<protein>
    <recommendedName>
        <fullName>WAP four-disulfide core domain protein 6A</fullName>
    </recommendedName>
    <alternativeName>
        <fullName>Putative protease inhibitor WAP6A</fullName>
    </alternativeName>
</protein>